<organism>
    <name type="scientific">Clostridium kluyveri (strain NBRC 12016)</name>
    <dbReference type="NCBI Taxonomy" id="583346"/>
    <lineage>
        <taxon>Bacteria</taxon>
        <taxon>Bacillati</taxon>
        <taxon>Bacillota</taxon>
        <taxon>Clostridia</taxon>
        <taxon>Eubacteriales</taxon>
        <taxon>Clostridiaceae</taxon>
        <taxon>Clostridium</taxon>
    </lineage>
</organism>
<protein>
    <recommendedName>
        <fullName evidence="1">Queuine tRNA-ribosyltransferase</fullName>
        <ecNumber evidence="1">2.4.2.29</ecNumber>
    </recommendedName>
    <alternativeName>
        <fullName evidence="1">Guanine insertion enzyme</fullName>
    </alternativeName>
    <alternativeName>
        <fullName evidence="1">tRNA-guanine transglycosylase</fullName>
    </alternativeName>
</protein>
<sequence>MYKLLKKDGSSRRGEFSTPHGVVQTPVFMNVGTLAAIKGAVSTEDLKEIGCQIELSNTYHLSLRPGDEVIRKLGGLHKFMNWDRPILTDSGGFQVFSLSGMRKIKEEGVYFNSHIDGRKIFMGPEESMRIQSNLASTVAMAFDECVENPAPKEYVEDSVKRTTRWLKRCKIEIDRLNSMPHTINNKQMLFGINQGGVHDDIRMEHAKIISDMDLDGYAIGGLAVGETHEEMYRVLEKVVPNLPENKPIYLMGVGTPANILEAVERGVDFFDCVMPSRNGRHSHVFTSYGVIHLLNAKYELDDNPIDSECSCPTCKNYTRAYIRHLFKAKEMLAMRLCVIHNLYFYNNLMKEIRESIDKGNFLQYKKEKLEKWNETV</sequence>
<reference key="1">
    <citation type="submission" date="2005-09" db="EMBL/GenBank/DDBJ databases">
        <title>Complete genome sequence of Clostridium kluyveri and comparative genomics of Clostridia species.</title>
        <authorList>
            <person name="Inui M."/>
            <person name="Nonaka H."/>
            <person name="Shinoda Y."/>
            <person name="Ikenaga Y."/>
            <person name="Abe M."/>
            <person name="Naito K."/>
            <person name="Vertes A.A."/>
            <person name="Yukawa H."/>
        </authorList>
    </citation>
    <scope>NUCLEOTIDE SEQUENCE [LARGE SCALE GENOMIC DNA]</scope>
    <source>
        <strain>NBRC 12016</strain>
    </source>
</reference>
<keyword id="KW-0328">Glycosyltransferase</keyword>
<keyword id="KW-0479">Metal-binding</keyword>
<keyword id="KW-0671">Queuosine biosynthesis</keyword>
<keyword id="KW-0808">Transferase</keyword>
<keyword id="KW-0819">tRNA processing</keyword>
<keyword id="KW-0862">Zinc</keyword>
<evidence type="ECO:0000255" key="1">
    <source>
        <dbReference type="HAMAP-Rule" id="MF_00168"/>
    </source>
</evidence>
<feature type="chain" id="PRO_1000197993" description="Queuine tRNA-ribosyltransferase">
    <location>
        <begin position="1"/>
        <end position="376"/>
    </location>
</feature>
<feature type="region of interest" description="RNA binding" evidence="1">
    <location>
        <begin position="252"/>
        <end position="258"/>
    </location>
</feature>
<feature type="active site" description="Proton acceptor" evidence="1">
    <location>
        <position position="89"/>
    </location>
</feature>
<feature type="active site" description="Nucleophile" evidence="1">
    <location>
        <position position="271"/>
    </location>
</feature>
<feature type="binding site" evidence="1">
    <location>
        <begin position="89"/>
        <end position="93"/>
    </location>
    <ligand>
        <name>substrate</name>
    </ligand>
</feature>
<feature type="binding site" evidence="1">
    <location>
        <position position="143"/>
    </location>
    <ligand>
        <name>substrate</name>
    </ligand>
</feature>
<feature type="binding site" evidence="1">
    <location>
        <position position="194"/>
    </location>
    <ligand>
        <name>substrate</name>
    </ligand>
</feature>
<feature type="binding site" evidence="1">
    <location>
        <position position="221"/>
    </location>
    <ligand>
        <name>substrate</name>
    </ligand>
</feature>
<feature type="binding site" evidence="1">
    <location>
        <position position="309"/>
    </location>
    <ligand>
        <name>Zn(2+)</name>
        <dbReference type="ChEBI" id="CHEBI:29105"/>
    </ligand>
</feature>
<feature type="binding site" evidence="1">
    <location>
        <position position="311"/>
    </location>
    <ligand>
        <name>Zn(2+)</name>
        <dbReference type="ChEBI" id="CHEBI:29105"/>
    </ligand>
</feature>
<feature type="binding site" evidence="1">
    <location>
        <position position="314"/>
    </location>
    <ligand>
        <name>Zn(2+)</name>
        <dbReference type="ChEBI" id="CHEBI:29105"/>
    </ligand>
</feature>
<feature type="binding site" evidence="1">
    <location>
        <position position="340"/>
    </location>
    <ligand>
        <name>Zn(2+)</name>
        <dbReference type="ChEBI" id="CHEBI:29105"/>
    </ligand>
</feature>
<name>TGT_CLOK1</name>
<proteinExistence type="inferred from homology"/>
<dbReference type="EC" id="2.4.2.29" evidence="1"/>
<dbReference type="EMBL" id="AP009049">
    <property type="protein sequence ID" value="BAH07831.1"/>
    <property type="molecule type" value="Genomic_DNA"/>
</dbReference>
<dbReference type="RefSeq" id="WP_012103485.1">
    <property type="nucleotide sequence ID" value="NC_011837.1"/>
</dbReference>
<dbReference type="SMR" id="B9E5Q6"/>
<dbReference type="KEGG" id="ckr:CKR_2780"/>
<dbReference type="HOGENOM" id="CLU_022060_0_1_9"/>
<dbReference type="UniPathway" id="UPA00392"/>
<dbReference type="Proteomes" id="UP000007969">
    <property type="component" value="Chromosome"/>
</dbReference>
<dbReference type="GO" id="GO:0005829">
    <property type="term" value="C:cytosol"/>
    <property type="evidence" value="ECO:0007669"/>
    <property type="project" value="TreeGrafter"/>
</dbReference>
<dbReference type="GO" id="GO:0046872">
    <property type="term" value="F:metal ion binding"/>
    <property type="evidence" value="ECO:0007669"/>
    <property type="project" value="UniProtKB-KW"/>
</dbReference>
<dbReference type="GO" id="GO:0008479">
    <property type="term" value="F:tRNA-guanosine(34) queuine transglycosylase activity"/>
    <property type="evidence" value="ECO:0007669"/>
    <property type="project" value="UniProtKB-UniRule"/>
</dbReference>
<dbReference type="GO" id="GO:0008616">
    <property type="term" value="P:queuosine biosynthetic process"/>
    <property type="evidence" value="ECO:0007669"/>
    <property type="project" value="UniProtKB-UniRule"/>
</dbReference>
<dbReference type="GO" id="GO:0002099">
    <property type="term" value="P:tRNA wobble guanine modification"/>
    <property type="evidence" value="ECO:0007669"/>
    <property type="project" value="TreeGrafter"/>
</dbReference>
<dbReference type="GO" id="GO:0101030">
    <property type="term" value="P:tRNA-guanine transglycosylation"/>
    <property type="evidence" value="ECO:0007669"/>
    <property type="project" value="InterPro"/>
</dbReference>
<dbReference type="FunFam" id="3.20.20.105:FF:000001">
    <property type="entry name" value="Queuine tRNA-ribosyltransferase"/>
    <property type="match status" value="1"/>
</dbReference>
<dbReference type="Gene3D" id="3.20.20.105">
    <property type="entry name" value="Queuine tRNA-ribosyltransferase-like"/>
    <property type="match status" value="1"/>
</dbReference>
<dbReference type="HAMAP" id="MF_00168">
    <property type="entry name" value="Q_tRNA_Tgt"/>
    <property type="match status" value="1"/>
</dbReference>
<dbReference type="InterPro" id="IPR050076">
    <property type="entry name" value="ArchSynthase1/Queuine_TRR"/>
</dbReference>
<dbReference type="InterPro" id="IPR004803">
    <property type="entry name" value="TGT"/>
</dbReference>
<dbReference type="InterPro" id="IPR036511">
    <property type="entry name" value="TGT-like_sf"/>
</dbReference>
<dbReference type="InterPro" id="IPR002616">
    <property type="entry name" value="tRNA_ribo_trans-like"/>
</dbReference>
<dbReference type="NCBIfam" id="TIGR00430">
    <property type="entry name" value="Q_tRNA_tgt"/>
    <property type="match status" value="1"/>
</dbReference>
<dbReference type="NCBIfam" id="TIGR00449">
    <property type="entry name" value="tgt_general"/>
    <property type="match status" value="1"/>
</dbReference>
<dbReference type="PANTHER" id="PTHR46499">
    <property type="entry name" value="QUEUINE TRNA-RIBOSYLTRANSFERASE"/>
    <property type="match status" value="1"/>
</dbReference>
<dbReference type="PANTHER" id="PTHR46499:SF1">
    <property type="entry name" value="QUEUINE TRNA-RIBOSYLTRANSFERASE"/>
    <property type="match status" value="1"/>
</dbReference>
<dbReference type="Pfam" id="PF01702">
    <property type="entry name" value="TGT"/>
    <property type="match status" value="1"/>
</dbReference>
<dbReference type="SUPFAM" id="SSF51713">
    <property type="entry name" value="tRNA-guanine transglycosylase"/>
    <property type="match status" value="1"/>
</dbReference>
<accession>B9E5Q6</accession>
<comment type="function">
    <text evidence="1">Catalyzes the base-exchange of a guanine (G) residue with the queuine precursor 7-aminomethyl-7-deazaguanine (PreQ1) at position 34 (anticodon wobble position) in tRNAs with GU(N) anticodons (tRNA-Asp, -Asn, -His and -Tyr). Catalysis occurs through a double-displacement mechanism. The nucleophile active site attacks the C1' of nucleotide 34 to detach the guanine base from the RNA, forming a covalent enzyme-RNA intermediate. The proton acceptor active site deprotonates the incoming PreQ1, allowing a nucleophilic attack on the C1' of the ribose to form the product. After dissociation, two additional enzymatic reactions on the tRNA convert PreQ1 to queuine (Q), resulting in the hypermodified nucleoside queuosine (7-(((4,5-cis-dihydroxy-2-cyclopenten-1-yl)amino)methyl)-7-deazaguanosine).</text>
</comment>
<comment type="catalytic activity">
    <reaction evidence="1">
        <text>7-aminomethyl-7-carbaguanine + guanosine(34) in tRNA = 7-aminomethyl-7-carbaguanosine(34) in tRNA + guanine</text>
        <dbReference type="Rhea" id="RHEA:24104"/>
        <dbReference type="Rhea" id="RHEA-COMP:10341"/>
        <dbReference type="Rhea" id="RHEA-COMP:10342"/>
        <dbReference type="ChEBI" id="CHEBI:16235"/>
        <dbReference type="ChEBI" id="CHEBI:58703"/>
        <dbReference type="ChEBI" id="CHEBI:74269"/>
        <dbReference type="ChEBI" id="CHEBI:82833"/>
        <dbReference type="EC" id="2.4.2.29"/>
    </reaction>
</comment>
<comment type="cofactor">
    <cofactor evidence="1">
        <name>Zn(2+)</name>
        <dbReference type="ChEBI" id="CHEBI:29105"/>
    </cofactor>
    <text evidence="1">Binds 1 zinc ion per subunit.</text>
</comment>
<comment type="pathway">
    <text evidence="1">tRNA modification; tRNA-queuosine biosynthesis.</text>
</comment>
<comment type="subunit">
    <text evidence="1">Homodimer. Within each dimer, one monomer is responsible for RNA recognition and catalysis, while the other monomer binds to the replacement base PreQ1.</text>
</comment>
<comment type="similarity">
    <text evidence="1">Belongs to the queuine tRNA-ribosyltransferase family.</text>
</comment>
<gene>
    <name evidence="1" type="primary">tgt</name>
    <name type="ordered locus">CKR_2780</name>
</gene>